<reference key="1">
    <citation type="submission" date="2008-05" db="EMBL/GenBank/DDBJ databases">
        <title>Complete sequence of Shigella boydii serotype 18 strain BS512.</title>
        <authorList>
            <person name="Rasko D.A."/>
            <person name="Rosovitz M."/>
            <person name="Maurelli A.T."/>
            <person name="Myers G."/>
            <person name="Seshadri R."/>
            <person name="Cer R."/>
            <person name="Jiang L."/>
            <person name="Ravel J."/>
            <person name="Sebastian Y."/>
        </authorList>
    </citation>
    <scope>NUCLEOTIDE SEQUENCE [LARGE SCALE GENOMIC DNA]</scope>
    <source>
        <strain>CDC 3083-94 / BS512</strain>
    </source>
</reference>
<dbReference type="EMBL" id="CP001063">
    <property type="protein sequence ID" value="ACD08567.1"/>
    <property type="molecule type" value="Genomic_DNA"/>
</dbReference>
<dbReference type="RefSeq" id="WP_000377129.1">
    <property type="nucleotide sequence ID" value="NC_010658.1"/>
</dbReference>
<dbReference type="SMR" id="B2U255"/>
<dbReference type="STRING" id="344609.SbBS512_E0041"/>
<dbReference type="KEGG" id="sbc:SbBS512_E0041"/>
<dbReference type="HOGENOM" id="CLU_005126_9_3_6"/>
<dbReference type="Proteomes" id="UP000001030">
    <property type="component" value="Chromosome"/>
</dbReference>
<dbReference type="GO" id="GO:0005886">
    <property type="term" value="C:plasma membrane"/>
    <property type="evidence" value="ECO:0007669"/>
    <property type="project" value="UniProtKB-SubCell"/>
</dbReference>
<dbReference type="GO" id="GO:0019899">
    <property type="term" value="F:enzyme binding"/>
    <property type="evidence" value="ECO:0007669"/>
    <property type="project" value="InterPro"/>
</dbReference>
<dbReference type="GO" id="GO:0015503">
    <property type="term" value="F:glutathione-regulated potassium exporter activity"/>
    <property type="evidence" value="ECO:0007669"/>
    <property type="project" value="UniProtKB-UniRule"/>
</dbReference>
<dbReference type="GO" id="GO:0015643">
    <property type="term" value="F:toxic substance binding"/>
    <property type="evidence" value="ECO:0007669"/>
    <property type="project" value="InterPro"/>
</dbReference>
<dbReference type="GO" id="GO:1902600">
    <property type="term" value="P:proton transmembrane transport"/>
    <property type="evidence" value="ECO:0007669"/>
    <property type="project" value="InterPro"/>
</dbReference>
<dbReference type="GO" id="GO:0051595">
    <property type="term" value="P:response to methylglyoxal"/>
    <property type="evidence" value="ECO:0007669"/>
    <property type="project" value="InterPro"/>
</dbReference>
<dbReference type="FunFam" id="1.20.1530.20:FF:000001">
    <property type="entry name" value="Glutathione-regulated potassium-efflux system protein KefB"/>
    <property type="match status" value="1"/>
</dbReference>
<dbReference type="FunFam" id="3.40.50.720:FF:000036">
    <property type="entry name" value="Glutathione-regulated potassium-efflux system protein KefB"/>
    <property type="match status" value="1"/>
</dbReference>
<dbReference type="Gene3D" id="1.20.1530.20">
    <property type="match status" value="1"/>
</dbReference>
<dbReference type="Gene3D" id="3.40.50.720">
    <property type="entry name" value="NAD(P)-binding Rossmann-like Domain"/>
    <property type="match status" value="1"/>
</dbReference>
<dbReference type="HAMAP" id="MF_01413">
    <property type="entry name" value="K_H_efflux_KefC"/>
    <property type="match status" value="1"/>
</dbReference>
<dbReference type="InterPro" id="IPR006153">
    <property type="entry name" value="Cation/H_exchanger_TM"/>
</dbReference>
<dbReference type="InterPro" id="IPR004771">
    <property type="entry name" value="K/H_exchanger"/>
</dbReference>
<dbReference type="InterPro" id="IPR023941">
    <property type="entry name" value="K_H_efflux_KefC"/>
</dbReference>
<dbReference type="InterPro" id="IPR006036">
    <property type="entry name" value="K_uptake_TrkA"/>
</dbReference>
<dbReference type="InterPro" id="IPR038770">
    <property type="entry name" value="Na+/solute_symporter_sf"/>
</dbReference>
<dbReference type="InterPro" id="IPR036291">
    <property type="entry name" value="NAD(P)-bd_dom_sf"/>
</dbReference>
<dbReference type="InterPro" id="IPR003148">
    <property type="entry name" value="RCK_N"/>
</dbReference>
<dbReference type="NCBIfam" id="TIGR00932">
    <property type="entry name" value="2a37"/>
    <property type="match status" value="1"/>
</dbReference>
<dbReference type="NCBIfam" id="NF002924">
    <property type="entry name" value="PRK03562.1"/>
    <property type="match status" value="1"/>
</dbReference>
<dbReference type="PANTHER" id="PTHR46157:SF3">
    <property type="entry name" value="GLUTATHIONE-REGULATED POTASSIUM-EFFLUX SYSTEM PROTEIN KEFC"/>
    <property type="match status" value="1"/>
</dbReference>
<dbReference type="PANTHER" id="PTHR46157">
    <property type="entry name" value="K(+) EFFLUX ANTIPORTER 3, CHLOROPLASTIC"/>
    <property type="match status" value="1"/>
</dbReference>
<dbReference type="Pfam" id="PF00999">
    <property type="entry name" value="Na_H_Exchanger"/>
    <property type="match status" value="1"/>
</dbReference>
<dbReference type="Pfam" id="PF02254">
    <property type="entry name" value="TrkA_N"/>
    <property type="match status" value="1"/>
</dbReference>
<dbReference type="PRINTS" id="PR00335">
    <property type="entry name" value="KUPTAKETRKA"/>
</dbReference>
<dbReference type="SUPFAM" id="SSF51735">
    <property type="entry name" value="NAD(P)-binding Rossmann-fold domains"/>
    <property type="match status" value="1"/>
</dbReference>
<dbReference type="PROSITE" id="PS51201">
    <property type="entry name" value="RCK_N"/>
    <property type="match status" value="1"/>
</dbReference>
<keyword id="KW-0050">Antiport</keyword>
<keyword id="KW-0997">Cell inner membrane</keyword>
<keyword id="KW-1003">Cell membrane</keyword>
<keyword id="KW-0406">Ion transport</keyword>
<keyword id="KW-0472">Membrane</keyword>
<keyword id="KW-0630">Potassium</keyword>
<keyword id="KW-0633">Potassium transport</keyword>
<keyword id="KW-1185">Reference proteome</keyword>
<keyword id="KW-0812">Transmembrane</keyword>
<keyword id="KW-1133">Transmembrane helix</keyword>
<keyword id="KW-0813">Transport</keyword>
<accession>B2U255</accession>
<organism>
    <name type="scientific">Shigella boydii serotype 18 (strain CDC 3083-94 / BS512)</name>
    <dbReference type="NCBI Taxonomy" id="344609"/>
    <lineage>
        <taxon>Bacteria</taxon>
        <taxon>Pseudomonadati</taxon>
        <taxon>Pseudomonadota</taxon>
        <taxon>Gammaproteobacteria</taxon>
        <taxon>Enterobacterales</taxon>
        <taxon>Enterobacteriaceae</taxon>
        <taxon>Shigella</taxon>
    </lineage>
</organism>
<sequence length="620" mass="67750">MDSHTLIQALIYLGSAALIVPIAVRLGLGSVLGYLIAGCIIGPWGLRLVTDAESILHFAEIGVVLMLFIIGLELDPQRLWKLRAAVFGGGALQMVICGGLLGLFCMLLGLRWQVAELIGMTLALSSTAIAMQAMNERNLMVTQMGRSAFAVLLFQDIAAIPLVAMIPLLATSSASTTMGAFALSALKVAGALVLVVLLGRYVTRPALRFVARSGLREVFSAVALFLVFGFGLLLEEVGLSMAMGAFLAGVLLASSEYRHALESDIEPFKGLLLGLFFIGVGMSIDFGTLLENPLRIVILLLGFLIIKIAMLWLIARPLQVPNKQRRWFAVLLGQGSEFAFVVFGAAQMANVLEPEWAKSLTLAVALSMAATPILLVILNRLEQSSTEEAREADEIDEEQPRVIIAGFGRFGQITGRLLLSSGVKMVVLDHDPDHIETLRKFGMKVFYGDATRMDLLESAGAAKAEVLINAIDDPQTNLQLTEMVKEHFPHLQIIARARDVDHYIRLRQAGVEKPERETFEGALKTGRLALESLGLGPYEARERADVFRRFNIQMVEEMAMVENDTKARAAVYKRTSAMLSEIITEDREHLSLIQRHGWQGTEEGKHTGNMADEPETKPSS</sequence>
<name>KEFC_SHIB3</name>
<gene>
    <name evidence="1" type="primary">kefC</name>
    <name type="ordered locus">SbBS512_E0041</name>
</gene>
<proteinExistence type="inferred from homology"/>
<evidence type="ECO:0000255" key="1">
    <source>
        <dbReference type="HAMAP-Rule" id="MF_01413"/>
    </source>
</evidence>
<evidence type="ECO:0000255" key="2">
    <source>
        <dbReference type="PROSITE-ProRule" id="PRU00543"/>
    </source>
</evidence>
<evidence type="ECO:0000256" key="3">
    <source>
        <dbReference type="SAM" id="MobiDB-lite"/>
    </source>
</evidence>
<feature type="chain" id="PRO_1000145552" description="Glutathione-regulated potassium-efflux system protein KefC">
    <location>
        <begin position="1"/>
        <end position="620"/>
    </location>
</feature>
<feature type="transmembrane region" description="Helical" evidence="1">
    <location>
        <begin position="4"/>
        <end position="24"/>
    </location>
</feature>
<feature type="transmembrane region" description="Helical" evidence="1">
    <location>
        <begin position="26"/>
        <end position="46"/>
    </location>
</feature>
<feature type="transmembrane region" description="Helical" evidence="1">
    <location>
        <begin position="54"/>
        <end position="74"/>
    </location>
</feature>
<feature type="transmembrane region" description="Helical" evidence="1">
    <location>
        <begin position="90"/>
        <end position="110"/>
    </location>
</feature>
<feature type="transmembrane region" description="Helical" evidence="1">
    <location>
        <begin position="114"/>
        <end position="134"/>
    </location>
</feature>
<feature type="transmembrane region" description="Helical" evidence="1">
    <location>
        <begin position="149"/>
        <end position="169"/>
    </location>
</feature>
<feature type="transmembrane region" description="Helical" evidence="1">
    <location>
        <begin position="178"/>
        <end position="198"/>
    </location>
</feature>
<feature type="transmembrane region" description="Helical" evidence="1">
    <location>
        <begin position="218"/>
        <end position="238"/>
    </location>
</feature>
<feature type="transmembrane region" description="Helical" evidence="1">
    <location>
        <begin position="270"/>
        <end position="290"/>
    </location>
</feature>
<feature type="transmembrane region" description="Helical" evidence="1">
    <location>
        <begin position="294"/>
        <end position="314"/>
    </location>
</feature>
<feature type="transmembrane region" description="Helical" evidence="1">
    <location>
        <begin position="327"/>
        <end position="347"/>
    </location>
</feature>
<feature type="transmembrane region" description="Helical" evidence="1">
    <location>
        <begin position="359"/>
        <end position="379"/>
    </location>
</feature>
<feature type="domain" description="RCK N-terminal" evidence="2">
    <location>
        <begin position="399"/>
        <end position="518"/>
    </location>
</feature>
<feature type="region of interest" description="Disordered" evidence="3">
    <location>
        <begin position="597"/>
        <end position="620"/>
    </location>
</feature>
<comment type="function">
    <text evidence="1">Pore-forming subunit of a potassium efflux system that confers protection against electrophiles. Catalyzes K(+)/H(+) antiport.</text>
</comment>
<comment type="subunit">
    <text evidence="1">Homodimer. Interacts with the regulatory subunit KefF.</text>
</comment>
<comment type="subcellular location">
    <subcellularLocation>
        <location evidence="1">Cell inner membrane</location>
        <topology evidence="1">Multi-pass membrane protein</topology>
    </subcellularLocation>
</comment>
<comment type="similarity">
    <text evidence="1">Belongs to the monovalent cation:proton antiporter 2 (CPA2) transporter (TC 2.A.37) family. KefC subfamily.</text>
</comment>
<protein>
    <recommendedName>
        <fullName evidence="1">Glutathione-regulated potassium-efflux system protein KefC</fullName>
    </recommendedName>
    <alternativeName>
        <fullName evidence="1">K(+)/H(+) antiporter</fullName>
    </alternativeName>
</protein>